<reference key="1">
    <citation type="journal article" date="2004" name="J. Bacteriol.">
        <title>Comparative genomics of two Leptospira interrogans serovars reveals novel insights into physiology and pathogenesis.</title>
        <authorList>
            <person name="Nascimento A.L.T.O."/>
            <person name="Ko A.I."/>
            <person name="Martins E.A.L."/>
            <person name="Monteiro-Vitorello C.B."/>
            <person name="Ho P.L."/>
            <person name="Haake D.A."/>
            <person name="Verjovski-Almeida S."/>
            <person name="Hartskeerl R.A."/>
            <person name="Marques M.V."/>
            <person name="Oliveira M.C."/>
            <person name="Menck C.F.M."/>
            <person name="Leite L.C.C."/>
            <person name="Carrer H."/>
            <person name="Coutinho L.L."/>
            <person name="Degrave W.M."/>
            <person name="Dellagostin O.A."/>
            <person name="El-Dorry H."/>
            <person name="Ferro E.S."/>
            <person name="Ferro M.I.T."/>
            <person name="Furlan L.R."/>
            <person name="Gamberini M."/>
            <person name="Giglioti E.A."/>
            <person name="Goes-Neto A."/>
            <person name="Goldman G.H."/>
            <person name="Goldman M.H.S."/>
            <person name="Harakava R."/>
            <person name="Jeronimo S.M.B."/>
            <person name="Junqueira-de-Azevedo I.L.M."/>
            <person name="Kimura E.T."/>
            <person name="Kuramae E.E."/>
            <person name="Lemos E.G.M."/>
            <person name="Lemos M.V.F."/>
            <person name="Marino C.L."/>
            <person name="Nunes L.R."/>
            <person name="de Oliveira R.C."/>
            <person name="Pereira G.G."/>
            <person name="Reis M.S."/>
            <person name="Schriefer A."/>
            <person name="Siqueira W.J."/>
            <person name="Sommer P."/>
            <person name="Tsai S.M."/>
            <person name="Simpson A.J.G."/>
            <person name="Ferro J.A."/>
            <person name="Camargo L.E.A."/>
            <person name="Kitajima J.P."/>
            <person name="Setubal J.C."/>
            <person name="Van Sluys M.A."/>
        </authorList>
    </citation>
    <scope>NUCLEOTIDE SEQUENCE [LARGE SCALE GENOMIC DNA]</scope>
    <source>
        <strain>Fiocruz L1-130</strain>
    </source>
</reference>
<gene>
    <name evidence="1" type="primary">alaS</name>
    <name type="ordered locus">LIC_10763</name>
</gene>
<comment type="function">
    <text evidence="1">Catalyzes the attachment of alanine to tRNA(Ala) in a two-step reaction: alanine is first activated by ATP to form Ala-AMP and then transferred to the acceptor end of tRNA(Ala). Also edits incorrectly charged Ser-tRNA(Ala) and Gly-tRNA(Ala) via its editing domain.</text>
</comment>
<comment type="catalytic activity">
    <reaction evidence="1">
        <text>tRNA(Ala) + L-alanine + ATP = L-alanyl-tRNA(Ala) + AMP + diphosphate</text>
        <dbReference type="Rhea" id="RHEA:12540"/>
        <dbReference type="Rhea" id="RHEA-COMP:9657"/>
        <dbReference type="Rhea" id="RHEA-COMP:9923"/>
        <dbReference type="ChEBI" id="CHEBI:30616"/>
        <dbReference type="ChEBI" id="CHEBI:33019"/>
        <dbReference type="ChEBI" id="CHEBI:57972"/>
        <dbReference type="ChEBI" id="CHEBI:78442"/>
        <dbReference type="ChEBI" id="CHEBI:78497"/>
        <dbReference type="ChEBI" id="CHEBI:456215"/>
        <dbReference type="EC" id="6.1.1.7"/>
    </reaction>
</comment>
<comment type="cofactor">
    <cofactor evidence="1">
        <name>Zn(2+)</name>
        <dbReference type="ChEBI" id="CHEBI:29105"/>
    </cofactor>
    <text evidence="1">Binds 1 zinc ion per subunit.</text>
</comment>
<comment type="subcellular location">
    <subcellularLocation>
        <location evidence="1">Cytoplasm</location>
    </subcellularLocation>
</comment>
<comment type="domain">
    <text evidence="1">Consists of three domains; the N-terminal catalytic domain, the editing domain and the C-terminal C-Ala domain. The editing domain removes incorrectly charged amino acids, while the C-Ala domain, along with tRNA(Ala), serves as a bridge to cooperatively bring together the editing and aminoacylation centers thus stimulating deacylation of misacylated tRNAs.</text>
</comment>
<comment type="similarity">
    <text evidence="1">Belongs to the class-II aminoacyl-tRNA synthetase family.</text>
</comment>
<name>SYA_LEPIC</name>
<sequence length="977" mass="108516">MKPKSVSEIREIFLNYFKDKSHNVVPSSSLLPAGDPTLLFTTAGMVQFKPLFTGAVELPYTRATSCQKCLRTTDLEVVGKTERHCTFFEMLGNFSFGNYFKEEAIEYALDCSVNHFGFDKNKIWVTVYTDDDEAEKIWLSKGIPKERITRLGKKDNFWGPAGDSGACGPCSELYLDRGIEKGGPNCATSGTCKPGCDCDRFLEFWNIVFNQFNQDTEGNLHPLKQTGIDTGSGLERVALLLQEVDSVYDTNELRKIISFYEELSGISYEDKTLSEISEKKNNNQQISSQVRNETKSIQDSRKTAFRVVTDHIRSVLFSIGDGIYPDRTGRGYVIRRLIRRATLFGRKLNFKEPFLYKLVDKVIEIYKARYPELQRNAAAITKTILVEEELFLKTLELGLEKIESLVQKTKAGGKTIFSGADAFLLYGTYGFPAEMTEEIVAEQGLDFDKKGFQEELEKDRQFSRESWKVNKVSLMTGLNVDKTEFLGYSSVSGKGNITHLFYNSPKSSNSLSQVDSKLQSSTPAGTGSYDSKQVSSLKEGQAGAIVLNKTPFYPEGGGQVGDIGFLRQGKNVFKVFDTQKENDSIIHFGEVLSGEFIVSQELEAEVEITRRERLKFHHSGTHLLNGALRTLLGDHVLQKGSIVSPEYLRFDFSHPSSLTSEEIRQIESWVNESIRKNFPVETKELSIEDAKKTGAVATFGEKYGERVRVVQMGDASIEFCGGTHVSRTGEIGYFFIKKESSPGAGNRRIEGVCGPAVIETFQNRFSELTESVQNLNLKIKSELGEEGTKILILSFIPGPDEIREKLEKEGASAVSFFRDLSENIATKIEENTSSFLKIKKNLAERDFENNTSVIENVLASSVDTGIGKIVSAIFEDKDPNSLKGLSDNLKVREKNLLVILGSRNSENASIVITCSSELTLKGIHCGNLIKTACELLGGKGGGRPDMAQGGGKEKQNLESAIAGVINEAKQILTGERV</sequence>
<keyword id="KW-0030">Aminoacyl-tRNA synthetase</keyword>
<keyword id="KW-0067">ATP-binding</keyword>
<keyword id="KW-0963">Cytoplasm</keyword>
<keyword id="KW-0436">Ligase</keyword>
<keyword id="KW-0479">Metal-binding</keyword>
<keyword id="KW-0547">Nucleotide-binding</keyword>
<keyword id="KW-0648">Protein biosynthesis</keyword>
<keyword id="KW-0694">RNA-binding</keyword>
<keyword id="KW-0820">tRNA-binding</keyword>
<keyword id="KW-0862">Zinc</keyword>
<evidence type="ECO:0000255" key="1">
    <source>
        <dbReference type="HAMAP-Rule" id="MF_00036"/>
    </source>
</evidence>
<evidence type="ECO:0000256" key="2">
    <source>
        <dbReference type="SAM" id="MobiDB-lite"/>
    </source>
</evidence>
<feature type="chain" id="PRO_0000075137" description="Alanine--tRNA ligase">
    <location>
        <begin position="1"/>
        <end position="977"/>
    </location>
</feature>
<feature type="region of interest" description="Disordered" evidence="2">
    <location>
        <begin position="512"/>
        <end position="535"/>
    </location>
</feature>
<feature type="binding site" evidence="1">
    <location>
        <position position="618"/>
    </location>
    <ligand>
        <name>Zn(2+)</name>
        <dbReference type="ChEBI" id="CHEBI:29105"/>
    </ligand>
</feature>
<feature type="binding site" evidence="1">
    <location>
        <position position="622"/>
    </location>
    <ligand>
        <name>Zn(2+)</name>
        <dbReference type="ChEBI" id="CHEBI:29105"/>
    </ligand>
</feature>
<feature type="binding site" evidence="1">
    <location>
        <position position="720"/>
    </location>
    <ligand>
        <name>Zn(2+)</name>
        <dbReference type="ChEBI" id="CHEBI:29105"/>
    </ligand>
</feature>
<feature type="binding site" evidence="1">
    <location>
        <position position="724"/>
    </location>
    <ligand>
        <name>Zn(2+)</name>
        <dbReference type="ChEBI" id="CHEBI:29105"/>
    </ligand>
</feature>
<proteinExistence type="inferred from homology"/>
<protein>
    <recommendedName>
        <fullName evidence="1">Alanine--tRNA ligase</fullName>
        <ecNumber evidence="1">6.1.1.7</ecNumber>
    </recommendedName>
    <alternativeName>
        <fullName evidence="1">Alanyl-tRNA synthetase</fullName>
        <shortName evidence="1">AlaRS</shortName>
    </alternativeName>
</protein>
<organism>
    <name type="scientific">Leptospira interrogans serogroup Icterohaemorrhagiae serovar copenhageni (strain Fiocruz L1-130)</name>
    <dbReference type="NCBI Taxonomy" id="267671"/>
    <lineage>
        <taxon>Bacteria</taxon>
        <taxon>Pseudomonadati</taxon>
        <taxon>Spirochaetota</taxon>
        <taxon>Spirochaetia</taxon>
        <taxon>Leptospirales</taxon>
        <taxon>Leptospiraceae</taxon>
        <taxon>Leptospira</taxon>
    </lineage>
</organism>
<accession>P61703</accession>
<dbReference type="EC" id="6.1.1.7" evidence="1"/>
<dbReference type="EMBL" id="AE016823">
    <property type="protein sequence ID" value="AAS69380.1"/>
    <property type="molecule type" value="Genomic_DNA"/>
</dbReference>
<dbReference type="RefSeq" id="WP_000802930.1">
    <property type="nucleotide sequence ID" value="NC_005823.1"/>
</dbReference>
<dbReference type="SMR" id="P61703"/>
<dbReference type="GeneID" id="61144104"/>
<dbReference type="KEGG" id="lic:LIC_10763"/>
<dbReference type="HOGENOM" id="CLU_004485_1_1_12"/>
<dbReference type="Proteomes" id="UP000007037">
    <property type="component" value="Chromosome I"/>
</dbReference>
<dbReference type="GO" id="GO:0005829">
    <property type="term" value="C:cytosol"/>
    <property type="evidence" value="ECO:0007669"/>
    <property type="project" value="TreeGrafter"/>
</dbReference>
<dbReference type="GO" id="GO:0004813">
    <property type="term" value="F:alanine-tRNA ligase activity"/>
    <property type="evidence" value="ECO:0007669"/>
    <property type="project" value="UniProtKB-UniRule"/>
</dbReference>
<dbReference type="GO" id="GO:0002161">
    <property type="term" value="F:aminoacyl-tRNA deacylase activity"/>
    <property type="evidence" value="ECO:0007669"/>
    <property type="project" value="TreeGrafter"/>
</dbReference>
<dbReference type="GO" id="GO:0005524">
    <property type="term" value="F:ATP binding"/>
    <property type="evidence" value="ECO:0007669"/>
    <property type="project" value="UniProtKB-UniRule"/>
</dbReference>
<dbReference type="GO" id="GO:0000049">
    <property type="term" value="F:tRNA binding"/>
    <property type="evidence" value="ECO:0007669"/>
    <property type="project" value="UniProtKB-KW"/>
</dbReference>
<dbReference type="GO" id="GO:0008270">
    <property type="term" value="F:zinc ion binding"/>
    <property type="evidence" value="ECO:0007669"/>
    <property type="project" value="UniProtKB-UniRule"/>
</dbReference>
<dbReference type="GO" id="GO:0006419">
    <property type="term" value="P:alanyl-tRNA aminoacylation"/>
    <property type="evidence" value="ECO:0007669"/>
    <property type="project" value="UniProtKB-UniRule"/>
</dbReference>
<dbReference type="CDD" id="cd00673">
    <property type="entry name" value="AlaRS_core"/>
    <property type="match status" value="1"/>
</dbReference>
<dbReference type="FunFam" id="2.40.30.130:FF:000029">
    <property type="entry name" value="Alanine--tRNA ligase"/>
    <property type="match status" value="1"/>
</dbReference>
<dbReference type="FunFam" id="3.10.310.40:FF:000001">
    <property type="entry name" value="Alanine--tRNA ligase"/>
    <property type="match status" value="1"/>
</dbReference>
<dbReference type="FunFam" id="3.30.54.20:FF:000001">
    <property type="entry name" value="Alanine--tRNA ligase"/>
    <property type="match status" value="1"/>
</dbReference>
<dbReference type="FunFam" id="3.30.930.10:FF:000004">
    <property type="entry name" value="Alanine--tRNA ligase"/>
    <property type="match status" value="1"/>
</dbReference>
<dbReference type="FunFam" id="3.30.980.10:FF:000004">
    <property type="entry name" value="Alanine--tRNA ligase, cytoplasmic"/>
    <property type="match status" value="1"/>
</dbReference>
<dbReference type="Gene3D" id="2.40.30.130">
    <property type="match status" value="1"/>
</dbReference>
<dbReference type="Gene3D" id="3.10.310.40">
    <property type="match status" value="1"/>
</dbReference>
<dbReference type="Gene3D" id="3.30.54.20">
    <property type="match status" value="1"/>
</dbReference>
<dbReference type="Gene3D" id="3.30.930.10">
    <property type="entry name" value="Bira Bifunctional Protein, Domain 2"/>
    <property type="match status" value="1"/>
</dbReference>
<dbReference type="Gene3D" id="3.30.980.10">
    <property type="entry name" value="Threonyl-trna Synthetase, Chain A, domain 2"/>
    <property type="match status" value="1"/>
</dbReference>
<dbReference type="HAMAP" id="MF_00036_B">
    <property type="entry name" value="Ala_tRNA_synth_B"/>
    <property type="match status" value="1"/>
</dbReference>
<dbReference type="InterPro" id="IPR045864">
    <property type="entry name" value="aa-tRNA-synth_II/BPL/LPL"/>
</dbReference>
<dbReference type="InterPro" id="IPR002318">
    <property type="entry name" value="Ala-tRNA-lgiase_IIc"/>
</dbReference>
<dbReference type="InterPro" id="IPR018162">
    <property type="entry name" value="Ala-tRNA-ligase_IIc_anticod-bd"/>
</dbReference>
<dbReference type="InterPro" id="IPR018165">
    <property type="entry name" value="Ala-tRNA-synth_IIc_core"/>
</dbReference>
<dbReference type="InterPro" id="IPR018164">
    <property type="entry name" value="Ala-tRNA-synth_IIc_N"/>
</dbReference>
<dbReference type="InterPro" id="IPR050058">
    <property type="entry name" value="Ala-tRNA_ligase"/>
</dbReference>
<dbReference type="InterPro" id="IPR023033">
    <property type="entry name" value="Ala_tRNA_ligase_euk/bac"/>
</dbReference>
<dbReference type="InterPro" id="IPR003156">
    <property type="entry name" value="DHHA1_dom"/>
</dbReference>
<dbReference type="InterPro" id="IPR018163">
    <property type="entry name" value="Thr/Ala-tRNA-synth_IIc_edit"/>
</dbReference>
<dbReference type="InterPro" id="IPR009000">
    <property type="entry name" value="Transl_B-barrel_sf"/>
</dbReference>
<dbReference type="InterPro" id="IPR012947">
    <property type="entry name" value="tRNA_SAD"/>
</dbReference>
<dbReference type="NCBIfam" id="TIGR00344">
    <property type="entry name" value="alaS"/>
    <property type="match status" value="1"/>
</dbReference>
<dbReference type="PANTHER" id="PTHR11777:SF9">
    <property type="entry name" value="ALANINE--TRNA LIGASE, CYTOPLASMIC"/>
    <property type="match status" value="1"/>
</dbReference>
<dbReference type="PANTHER" id="PTHR11777">
    <property type="entry name" value="ALANYL-TRNA SYNTHETASE"/>
    <property type="match status" value="1"/>
</dbReference>
<dbReference type="Pfam" id="PF02272">
    <property type="entry name" value="DHHA1"/>
    <property type="match status" value="1"/>
</dbReference>
<dbReference type="Pfam" id="PF01411">
    <property type="entry name" value="tRNA-synt_2c"/>
    <property type="match status" value="1"/>
</dbReference>
<dbReference type="Pfam" id="PF07973">
    <property type="entry name" value="tRNA_SAD"/>
    <property type="match status" value="1"/>
</dbReference>
<dbReference type="PRINTS" id="PR00980">
    <property type="entry name" value="TRNASYNTHALA"/>
</dbReference>
<dbReference type="SMART" id="SM00863">
    <property type="entry name" value="tRNA_SAD"/>
    <property type="match status" value="1"/>
</dbReference>
<dbReference type="SUPFAM" id="SSF55681">
    <property type="entry name" value="Class II aaRS and biotin synthetases"/>
    <property type="match status" value="1"/>
</dbReference>
<dbReference type="SUPFAM" id="SSF101353">
    <property type="entry name" value="Putative anticodon-binding domain of alanyl-tRNA synthetase (AlaRS)"/>
    <property type="match status" value="1"/>
</dbReference>
<dbReference type="SUPFAM" id="SSF55186">
    <property type="entry name" value="ThrRS/AlaRS common domain"/>
    <property type="match status" value="1"/>
</dbReference>
<dbReference type="SUPFAM" id="SSF50447">
    <property type="entry name" value="Translation proteins"/>
    <property type="match status" value="1"/>
</dbReference>
<dbReference type="PROSITE" id="PS50860">
    <property type="entry name" value="AA_TRNA_LIGASE_II_ALA"/>
    <property type="match status" value="1"/>
</dbReference>